<organism>
    <name type="scientific">Bacillus subtilis (strain 168)</name>
    <dbReference type="NCBI Taxonomy" id="224308"/>
    <lineage>
        <taxon>Bacteria</taxon>
        <taxon>Bacillati</taxon>
        <taxon>Bacillota</taxon>
        <taxon>Bacilli</taxon>
        <taxon>Bacillales</taxon>
        <taxon>Bacillaceae</taxon>
        <taxon>Bacillus</taxon>
    </lineage>
</organism>
<feature type="chain" id="PRO_0000389608" description="Uncharacterized membrane protein YkoI">
    <location>
        <begin position="1"/>
        <end position="226"/>
    </location>
</feature>
<feature type="transmembrane region" description="Helical" evidence="1">
    <location>
        <begin position="5"/>
        <end position="25"/>
    </location>
</feature>
<keyword id="KW-1003">Cell membrane</keyword>
<keyword id="KW-0472">Membrane</keyword>
<keyword id="KW-1185">Reference proteome</keyword>
<keyword id="KW-0812">Transmembrane</keyword>
<keyword id="KW-1133">Transmembrane helix</keyword>
<name>YKOI_BACSU</name>
<gene>
    <name type="primary">ykoI</name>
    <name type="ordered locus">BSU13270</name>
</gene>
<reference key="1">
    <citation type="submission" date="1997-11" db="EMBL/GenBank/DDBJ databases">
        <title>Sequence of the Bacillus subtilis genome between xlyA and ykoR.</title>
        <authorList>
            <person name="Devine K.M."/>
        </authorList>
    </citation>
    <scope>NUCLEOTIDE SEQUENCE [GENOMIC DNA]</scope>
    <source>
        <strain>168</strain>
    </source>
</reference>
<reference key="2">
    <citation type="journal article" date="1997" name="Nature">
        <title>The complete genome sequence of the Gram-positive bacterium Bacillus subtilis.</title>
        <authorList>
            <person name="Kunst F."/>
            <person name="Ogasawara N."/>
            <person name="Moszer I."/>
            <person name="Albertini A.M."/>
            <person name="Alloni G."/>
            <person name="Azevedo V."/>
            <person name="Bertero M.G."/>
            <person name="Bessieres P."/>
            <person name="Bolotin A."/>
            <person name="Borchert S."/>
            <person name="Borriss R."/>
            <person name="Boursier L."/>
            <person name="Brans A."/>
            <person name="Braun M."/>
            <person name="Brignell S.C."/>
            <person name="Bron S."/>
            <person name="Brouillet S."/>
            <person name="Bruschi C.V."/>
            <person name="Caldwell B."/>
            <person name="Capuano V."/>
            <person name="Carter N.M."/>
            <person name="Choi S.-K."/>
            <person name="Codani J.-J."/>
            <person name="Connerton I.F."/>
            <person name="Cummings N.J."/>
            <person name="Daniel R.A."/>
            <person name="Denizot F."/>
            <person name="Devine K.M."/>
            <person name="Duesterhoeft A."/>
            <person name="Ehrlich S.D."/>
            <person name="Emmerson P.T."/>
            <person name="Entian K.-D."/>
            <person name="Errington J."/>
            <person name="Fabret C."/>
            <person name="Ferrari E."/>
            <person name="Foulger D."/>
            <person name="Fritz C."/>
            <person name="Fujita M."/>
            <person name="Fujita Y."/>
            <person name="Fuma S."/>
            <person name="Galizzi A."/>
            <person name="Galleron N."/>
            <person name="Ghim S.-Y."/>
            <person name="Glaser P."/>
            <person name="Goffeau A."/>
            <person name="Golightly E.J."/>
            <person name="Grandi G."/>
            <person name="Guiseppi G."/>
            <person name="Guy B.J."/>
            <person name="Haga K."/>
            <person name="Haiech J."/>
            <person name="Harwood C.R."/>
            <person name="Henaut A."/>
            <person name="Hilbert H."/>
            <person name="Holsappel S."/>
            <person name="Hosono S."/>
            <person name="Hullo M.-F."/>
            <person name="Itaya M."/>
            <person name="Jones L.-M."/>
            <person name="Joris B."/>
            <person name="Karamata D."/>
            <person name="Kasahara Y."/>
            <person name="Klaerr-Blanchard M."/>
            <person name="Klein C."/>
            <person name="Kobayashi Y."/>
            <person name="Koetter P."/>
            <person name="Koningstein G."/>
            <person name="Krogh S."/>
            <person name="Kumano M."/>
            <person name="Kurita K."/>
            <person name="Lapidus A."/>
            <person name="Lardinois S."/>
            <person name="Lauber J."/>
            <person name="Lazarevic V."/>
            <person name="Lee S.-M."/>
            <person name="Levine A."/>
            <person name="Liu H."/>
            <person name="Masuda S."/>
            <person name="Mauel C."/>
            <person name="Medigue C."/>
            <person name="Medina N."/>
            <person name="Mellado R.P."/>
            <person name="Mizuno M."/>
            <person name="Moestl D."/>
            <person name="Nakai S."/>
            <person name="Noback M."/>
            <person name="Noone D."/>
            <person name="O'Reilly M."/>
            <person name="Ogawa K."/>
            <person name="Ogiwara A."/>
            <person name="Oudega B."/>
            <person name="Park S.-H."/>
            <person name="Parro V."/>
            <person name="Pohl T.M."/>
            <person name="Portetelle D."/>
            <person name="Porwollik S."/>
            <person name="Prescott A.M."/>
            <person name="Presecan E."/>
            <person name="Pujic P."/>
            <person name="Purnelle B."/>
            <person name="Rapoport G."/>
            <person name="Rey M."/>
            <person name="Reynolds S."/>
            <person name="Rieger M."/>
            <person name="Rivolta C."/>
            <person name="Rocha E."/>
            <person name="Roche B."/>
            <person name="Rose M."/>
            <person name="Sadaie Y."/>
            <person name="Sato T."/>
            <person name="Scanlan E."/>
            <person name="Schleich S."/>
            <person name="Schroeter R."/>
            <person name="Scoffone F."/>
            <person name="Sekiguchi J."/>
            <person name="Sekowska A."/>
            <person name="Seror S.J."/>
            <person name="Serror P."/>
            <person name="Shin B.-S."/>
            <person name="Soldo B."/>
            <person name="Sorokin A."/>
            <person name="Tacconi E."/>
            <person name="Takagi T."/>
            <person name="Takahashi H."/>
            <person name="Takemaru K."/>
            <person name="Takeuchi M."/>
            <person name="Tamakoshi A."/>
            <person name="Tanaka T."/>
            <person name="Terpstra P."/>
            <person name="Tognoni A."/>
            <person name="Tosato V."/>
            <person name="Uchiyama S."/>
            <person name="Vandenbol M."/>
            <person name="Vannier F."/>
            <person name="Vassarotti A."/>
            <person name="Viari A."/>
            <person name="Wambutt R."/>
            <person name="Wedler E."/>
            <person name="Wedler H."/>
            <person name="Weitzenegger T."/>
            <person name="Winters P."/>
            <person name="Wipat A."/>
            <person name="Yamamoto H."/>
            <person name="Yamane K."/>
            <person name="Yasumoto K."/>
            <person name="Yata K."/>
            <person name="Yoshida K."/>
            <person name="Yoshikawa H.-F."/>
            <person name="Zumstein E."/>
            <person name="Yoshikawa H."/>
            <person name="Danchin A."/>
        </authorList>
    </citation>
    <scope>NUCLEOTIDE SEQUENCE [LARGE SCALE GENOMIC DNA]</scope>
    <source>
        <strain>168</strain>
    </source>
</reference>
<protein>
    <recommendedName>
        <fullName>Uncharacterized membrane protein YkoI</fullName>
    </recommendedName>
</protein>
<evidence type="ECO:0000255" key="1"/>
<evidence type="ECO:0000305" key="2"/>
<comment type="subcellular location">
    <subcellularLocation>
        <location evidence="2">Cell membrane</location>
        <topology evidence="2">Single-pass membrane protein</topology>
    </subcellularLocation>
</comment>
<sequence>MTKTIKTVSFAAAAILVVIICTFLIIRQTHENVLSKETVVKKVEASYEGKVTKATQSKDKKTYDITLENPKGTYFVKADAISADILSMNRVKAVNPSAMTEKEAEHLALERVPGTVKKQTRQSQVATYTIQKEDGKTYEVKVDMQAKTVLSADQISSKDQQKTPITKKEAKTIAERKTGGTADDADLEESEGTLIFEVDVDLPDNKEATVKINAYTGKVANIVYED</sequence>
<proteinExistence type="predicted"/>
<dbReference type="EMBL" id="AJ002571">
    <property type="protein sequence ID" value="CAA05606.1"/>
    <property type="molecule type" value="Genomic_DNA"/>
</dbReference>
<dbReference type="EMBL" id="AL009126">
    <property type="protein sequence ID" value="CAB13184.1"/>
    <property type="molecule type" value="Genomic_DNA"/>
</dbReference>
<dbReference type="PIR" id="E69859">
    <property type="entry name" value="E69859"/>
</dbReference>
<dbReference type="RefSeq" id="NP_389210.1">
    <property type="nucleotide sequence ID" value="NC_000964.3"/>
</dbReference>
<dbReference type="RefSeq" id="WP_003244905.1">
    <property type="nucleotide sequence ID" value="NZ_OZ025638.1"/>
</dbReference>
<dbReference type="SMR" id="O34551"/>
<dbReference type="FunCoup" id="O34551">
    <property type="interactions" value="15"/>
</dbReference>
<dbReference type="STRING" id="224308.BSU13270"/>
<dbReference type="PaxDb" id="224308-BSU13270"/>
<dbReference type="DNASU" id="939827"/>
<dbReference type="EnsemblBacteria" id="CAB13184">
    <property type="protein sequence ID" value="CAB13184"/>
    <property type="gene ID" value="BSU_13270"/>
</dbReference>
<dbReference type="GeneID" id="939827"/>
<dbReference type="KEGG" id="bsu:BSU13270"/>
<dbReference type="PATRIC" id="fig|224308.179.peg.1441"/>
<dbReference type="eggNOG" id="COG3212">
    <property type="taxonomic scope" value="Bacteria"/>
</dbReference>
<dbReference type="InParanoid" id="O34551"/>
<dbReference type="OrthoDB" id="2839951at2"/>
<dbReference type="PhylomeDB" id="O34551"/>
<dbReference type="BioCyc" id="BSUB:BSU13270-MONOMER"/>
<dbReference type="Proteomes" id="UP000001570">
    <property type="component" value="Chromosome"/>
</dbReference>
<dbReference type="GO" id="GO:0005886">
    <property type="term" value="C:plasma membrane"/>
    <property type="evidence" value="ECO:0007669"/>
    <property type="project" value="UniProtKB-SubCell"/>
</dbReference>
<dbReference type="Gene3D" id="3.10.450.40">
    <property type="match status" value="1"/>
</dbReference>
<dbReference type="InterPro" id="IPR025711">
    <property type="entry name" value="PepSY"/>
</dbReference>
<dbReference type="Pfam" id="PF03413">
    <property type="entry name" value="PepSY"/>
    <property type="match status" value="3"/>
</dbReference>
<accession>O34551</accession>
<accession>Q796L6</accession>